<proteinExistence type="inferred from homology"/>
<dbReference type="EMBL" id="CR936503">
    <property type="protein sequence ID" value="CAI56055.1"/>
    <property type="molecule type" value="Genomic_DNA"/>
</dbReference>
<dbReference type="RefSeq" id="WP_004270183.1">
    <property type="nucleotide sequence ID" value="NC_007576.1"/>
</dbReference>
<dbReference type="SMR" id="Q38US9"/>
<dbReference type="STRING" id="314315.LCA_1747"/>
<dbReference type="GeneID" id="57132663"/>
<dbReference type="KEGG" id="lsa:LCA_1747"/>
<dbReference type="eggNOG" id="COG1841">
    <property type="taxonomic scope" value="Bacteria"/>
</dbReference>
<dbReference type="HOGENOM" id="CLU_131047_2_1_9"/>
<dbReference type="OrthoDB" id="9812790at2"/>
<dbReference type="Proteomes" id="UP000002707">
    <property type="component" value="Chromosome"/>
</dbReference>
<dbReference type="GO" id="GO:0015934">
    <property type="term" value="C:large ribosomal subunit"/>
    <property type="evidence" value="ECO:0007669"/>
    <property type="project" value="InterPro"/>
</dbReference>
<dbReference type="GO" id="GO:0003735">
    <property type="term" value="F:structural constituent of ribosome"/>
    <property type="evidence" value="ECO:0007669"/>
    <property type="project" value="InterPro"/>
</dbReference>
<dbReference type="GO" id="GO:0006412">
    <property type="term" value="P:translation"/>
    <property type="evidence" value="ECO:0007669"/>
    <property type="project" value="UniProtKB-UniRule"/>
</dbReference>
<dbReference type="CDD" id="cd00355">
    <property type="entry name" value="Ribosomal_L30_like"/>
    <property type="match status" value="1"/>
</dbReference>
<dbReference type="Gene3D" id="3.30.1390.20">
    <property type="entry name" value="Ribosomal protein L30, ferredoxin-like fold domain"/>
    <property type="match status" value="1"/>
</dbReference>
<dbReference type="HAMAP" id="MF_01371_B">
    <property type="entry name" value="Ribosomal_uL30_B"/>
    <property type="match status" value="1"/>
</dbReference>
<dbReference type="InterPro" id="IPR036919">
    <property type="entry name" value="Ribo_uL30_ferredoxin-like_sf"/>
</dbReference>
<dbReference type="InterPro" id="IPR005996">
    <property type="entry name" value="Ribosomal_uL30_bac-type"/>
</dbReference>
<dbReference type="InterPro" id="IPR016082">
    <property type="entry name" value="Ribosomal_uL30_ferredoxin-like"/>
</dbReference>
<dbReference type="NCBIfam" id="TIGR01308">
    <property type="entry name" value="rpmD_bact"/>
    <property type="match status" value="1"/>
</dbReference>
<dbReference type="Pfam" id="PF00327">
    <property type="entry name" value="Ribosomal_L30"/>
    <property type="match status" value="1"/>
</dbReference>
<dbReference type="PIRSF" id="PIRSF002211">
    <property type="entry name" value="Ribosomal_L30_bac-type"/>
    <property type="match status" value="1"/>
</dbReference>
<dbReference type="SUPFAM" id="SSF55129">
    <property type="entry name" value="Ribosomal protein L30p/L7e"/>
    <property type="match status" value="1"/>
</dbReference>
<reference key="1">
    <citation type="journal article" date="2005" name="Nat. Biotechnol.">
        <title>The complete genome sequence of the meat-borne lactic acid bacterium Lactobacillus sakei 23K.</title>
        <authorList>
            <person name="Chaillou S."/>
            <person name="Champomier-Verges M.-C."/>
            <person name="Cornet M."/>
            <person name="Crutz-Le Coq A.-M."/>
            <person name="Dudez A.-M."/>
            <person name="Martin V."/>
            <person name="Beaufils S."/>
            <person name="Darbon-Rongere E."/>
            <person name="Bossy R."/>
            <person name="Loux V."/>
            <person name="Zagorec M."/>
        </authorList>
    </citation>
    <scope>NUCLEOTIDE SEQUENCE [LARGE SCALE GENOMIC DNA]</scope>
    <source>
        <strain>23K</strain>
    </source>
</reference>
<protein>
    <recommendedName>
        <fullName evidence="1">Large ribosomal subunit protein uL30</fullName>
    </recommendedName>
    <alternativeName>
        <fullName evidence="2">50S ribosomal protein L30</fullName>
    </alternativeName>
</protein>
<keyword id="KW-1185">Reference proteome</keyword>
<keyword id="KW-0687">Ribonucleoprotein</keyword>
<keyword id="KW-0689">Ribosomal protein</keyword>
<feature type="chain" id="PRO_1000056059" description="Large ribosomal subunit protein uL30">
    <location>
        <begin position="1"/>
        <end position="61"/>
    </location>
</feature>
<accession>Q38US9</accession>
<evidence type="ECO:0000255" key="1">
    <source>
        <dbReference type="HAMAP-Rule" id="MF_01371"/>
    </source>
</evidence>
<evidence type="ECO:0000305" key="2"/>
<gene>
    <name evidence="1" type="primary">rpmD</name>
    <name type="ordered locus">LCA_1747</name>
</gene>
<organism>
    <name type="scientific">Latilactobacillus sakei subsp. sakei (strain 23K)</name>
    <name type="common">Lactobacillus sakei subsp. sakei</name>
    <dbReference type="NCBI Taxonomy" id="314315"/>
    <lineage>
        <taxon>Bacteria</taxon>
        <taxon>Bacillati</taxon>
        <taxon>Bacillota</taxon>
        <taxon>Bacilli</taxon>
        <taxon>Lactobacillales</taxon>
        <taxon>Lactobacillaceae</taxon>
        <taxon>Latilactobacillus</taxon>
    </lineage>
</organism>
<comment type="subunit">
    <text evidence="1">Part of the 50S ribosomal subunit.</text>
</comment>
<comment type="similarity">
    <text evidence="1">Belongs to the universal ribosomal protein uL30 family.</text>
</comment>
<name>RL30_LATSS</name>
<sequence length="61" mass="6899">MAKLKITLRKSAAHRLPEQRKMVKEFGLNRVNSSVIKPDDAATRGVIFKLAHLVTVEEIKD</sequence>